<accession>Q0BT31</accession>
<gene>
    <name evidence="1" type="primary">hfq</name>
    <name type="ordered locus">GbCGDNIH1_1123</name>
</gene>
<proteinExistence type="inferred from homology"/>
<dbReference type="EMBL" id="CP000394">
    <property type="protein sequence ID" value="ABI62021.1"/>
    <property type="molecule type" value="Genomic_DNA"/>
</dbReference>
<dbReference type="RefSeq" id="WP_011631830.1">
    <property type="nucleotide sequence ID" value="NC_008343.2"/>
</dbReference>
<dbReference type="SMR" id="Q0BT31"/>
<dbReference type="STRING" id="391165.GbCGDNIH1_1123"/>
<dbReference type="KEGG" id="gbe:GbCGDNIH1_1123"/>
<dbReference type="eggNOG" id="COG1923">
    <property type="taxonomic scope" value="Bacteria"/>
</dbReference>
<dbReference type="HOGENOM" id="CLU_113688_0_0_5"/>
<dbReference type="OrthoDB" id="9799751at2"/>
<dbReference type="Proteomes" id="UP000001963">
    <property type="component" value="Chromosome"/>
</dbReference>
<dbReference type="GO" id="GO:0005829">
    <property type="term" value="C:cytosol"/>
    <property type="evidence" value="ECO:0007669"/>
    <property type="project" value="TreeGrafter"/>
</dbReference>
<dbReference type="GO" id="GO:0003723">
    <property type="term" value="F:RNA binding"/>
    <property type="evidence" value="ECO:0007669"/>
    <property type="project" value="UniProtKB-UniRule"/>
</dbReference>
<dbReference type="GO" id="GO:0006355">
    <property type="term" value="P:regulation of DNA-templated transcription"/>
    <property type="evidence" value="ECO:0007669"/>
    <property type="project" value="InterPro"/>
</dbReference>
<dbReference type="GO" id="GO:0043487">
    <property type="term" value="P:regulation of RNA stability"/>
    <property type="evidence" value="ECO:0007669"/>
    <property type="project" value="TreeGrafter"/>
</dbReference>
<dbReference type="GO" id="GO:0045974">
    <property type="term" value="P:regulation of translation, ncRNA-mediated"/>
    <property type="evidence" value="ECO:0007669"/>
    <property type="project" value="TreeGrafter"/>
</dbReference>
<dbReference type="CDD" id="cd01716">
    <property type="entry name" value="Hfq"/>
    <property type="match status" value="1"/>
</dbReference>
<dbReference type="Gene3D" id="2.30.30.100">
    <property type="match status" value="1"/>
</dbReference>
<dbReference type="HAMAP" id="MF_00436">
    <property type="entry name" value="Hfq"/>
    <property type="match status" value="1"/>
</dbReference>
<dbReference type="InterPro" id="IPR005001">
    <property type="entry name" value="Hfq"/>
</dbReference>
<dbReference type="InterPro" id="IPR010920">
    <property type="entry name" value="LSM_dom_sf"/>
</dbReference>
<dbReference type="InterPro" id="IPR047575">
    <property type="entry name" value="Sm"/>
</dbReference>
<dbReference type="NCBIfam" id="TIGR02383">
    <property type="entry name" value="Hfq"/>
    <property type="match status" value="1"/>
</dbReference>
<dbReference type="NCBIfam" id="NF001602">
    <property type="entry name" value="PRK00395.1"/>
    <property type="match status" value="1"/>
</dbReference>
<dbReference type="PANTHER" id="PTHR34772">
    <property type="entry name" value="RNA-BINDING PROTEIN HFQ"/>
    <property type="match status" value="1"/>
</dbReference>
<dbReference type="PANTHER" id="PTHR34772:SF1">
    <property type="entry name" value="RNA-BINDING PROTEIN HFQ"/>
    <property type="match status" value="1"/>
</dbReference>
<dbReference type="Pfam" id="PF17209">
    <property type="entry name" value="Hfq"/>
    <property type="match status" value="1"/>
</dbReference>
<dbReference type="SUPFAM" id="SSF50182">
    <property type="entry name" value="Sm-like ribonucleoproteins"/>
    <property type="match status" value="1"/>
</dbReference>
<dbReference type="PROSITE" id="PS52002">
    <property type="entry name" value="SM"/>
    <property type="match status" value="1"/>
</dbReference>
<keyword id="KW-1185">Reference proteome</keyword>
<keyword id="KW-0694">RNA-binding</keyword>
<keyword id="KW-0346">Stress response</keyword>
<feature type="chain" id="PRO_0000265159" description="RNA-binding protein Hfq">
    <location>
        <begin position="1"/>
        <end position="93"/>
    </location>
</feature>
<feature type="domain" description="Sm" evidence="2">
    <location>
        <begin position="11"/>
        <end position="71"/>
    </location>
</feature>
<protein>
    <recommendedName>
        <fullName evidence="1">RNA-binding protein Hfq</fullName>
    </recommendedName>
</protein>
<evidence type="ECO:0000255" key="1">
    <source>
        <dbReference type="HAMAP-Rule" id="MF_00436"/>
    </source>
</evidence>
<evidence type="ECO:0000255" key="2">
    <source>
        <dbReference type="PROSITE-ProRule" id="PRU01346"/>
    </source>
</evidence>
<name>HFQ_GRABC</name>
<reference key="1">
    <citation type="journal article" date="2007" name="J. Bacteriol.">
        <title>Genome sequence analysis of the emerging human pathogenic acetic acid bacterium Granulibacter bethesdensis.</title>
        <authorList>
            <person name="Greenberg D.E."/>
            <person name="Porcella S.F."/>
            <person name="Zelazny A.M."/>
            <person name="Virtaneva K."/>
            <person name="Sturdevant D.E."/>
            <person name="Kupko J.J. III"/>
            <person name="Barbian K.D."/>
            <person name="Babar A."/>
            <person name="Dorward D.W."/>
            <person name="Holland S.M."/>
        </authorList>
    </citation>
    <scope>NUCLEOTIDE SEQUENCE [LARGE SCALE GENOMIC DNA]</scope>
    <source>
        <strain>ATCC BAA-1260 / CGDNIH1</strain>
    </source>
</reference>
<organism>
    <name type="scientific">Granulibacter bethesdensis (strain ATCC BAA-1260 / CGDNIH1)</name>
    <dbReference type="NCBI Taxonomy" id="391165"/>
    <lineage>
        <taxon>Bacteria</taxon>
        <taxon>Pseudomonadati</taxon>
        <taxon>Pseudomonadota</taxon>
        <taxon>Alphaproteobacteria</taxon>
        <taxon>Acetobacterales</taxon>
        <taxon>Acetobacteraceae</taxon>
        <taxon>Granulibacter</taxon>
    </lineage>
</organism>
<comment type="function">
    <text evidence="1">RNA chaperone that binds small regulatory RNA (sRNAs) and mRNAs to facilitate mRNA translational regulation in response to envelope stress, environmental stress and changes in metabolite concentrations. Also binds with high specificity to tRNAs.</text>
</comment>
<comment type="subunit">
    <text evidence="1">Homohexamer.</text>
</comment>
<comment type="similarity">
    <text evidence="1">Belongs to the Hfq family.</text>
</comment>
<sequence length="93" mass="10361">MASEKSQNVQDVFLNHVRKSKTPVTVFLVNGVKLQGIITWFDNFSVLLRRDGHTQLVYKHAISTVMPGAPIQLFDATKPEGDLGRDTAAYSDE</sequence>